<evidence type="ECO:0000255" key="1">
    <source>
        <dbReference type="HAMAP-Rule" id="MF_01409"/>
    </source>
</evidence>
<dbReference type="EC" id="2.3.3.10" evidence="1"/>
<dbReference type="EMBL" id="CP001014">
    <property type="protein sequence ID" value="ACB40282.1"/>
    <property type="molecule type" value="Genomic_DNA"/>
</dbReference>
<dbReference type="RefSeq" id="WP_012350701.1">
    <property type="nucleotide sequence ID" value="NC_010525.1"/>
</dbReference>
<dbReference type="SMR" id="B1Y953"/>
<dbReference type="STRING" id="444157.Tneu_1356"/>
<dbReference type="GeneID" id="6164970"/>
<dbReference type="KEGG" id="tne:Tneu_1356"/>
<dbReference type="eggNOG" id="arCOG01767">
    <property type="taxonomic scope" value="Archaea"/>
</dbReference>
<dbReference type="HOGENOM" id="CLU_039592_7_0_2"/>
<dbReference type="OrthoDB" id="5812at2157"/>
<dbReference type="UniPathway" id="UPA00058">
    <property type="reaction ID" value="UER00102"/>
</dbReference>
<dbReference type="Proteomes" id="UP000001694">
    <property type="component" value="Chromosome"/>
</dbReference>
<dbReference type="GO" id="GO:0003985">
    <property type="term" value="F:acetyl-CoA C-acetyltransferase activity"/>
    <property type="evidence" value="ECO:0007669"/>
    <property type="project" value="UniProtKB-UniRule"/>
</dbReference>
<dbReference type="GO" id="GO:0004421">
    <property type="term" value="F:hydroxymethylglutaryl-CoA synthase activity"/>
    <property type="evidence" value="ECO:0007669"/>
    <property type="project" value="InterPro"/>
</dbReference>
<dbReference type="GO" id="GO:0010142">
    <property type="term" value="P:farnesyl diphosphate biosynthetic process, mevalonate pathway"/>
    <property type="evidence" value="ECO:0007669"/>
    <property type="project" value="TreeGrafter"/>
</dbReference>
<dbReference type="GO" id="GO:0019287">
    <property type="term" value="P:isopentenyl diphosphate biosynthetic process, mevalonate pathway"/>
    <property type="evidence" value="ECO:0007669"/>
    <property type="project" value="UniProtKB-UniRule"/>
</dbReference>
<dbReference type="CDD" id="cd00827">
    <property type="entry name" value="init_cond_enzymes"/>
    <property type="match status" value="1"/>
</dbReference>
<dbReference type="FunFam" id="3.40.47.10:FF:000046">
    <property type="entry name" value="UPF0219 protein M1627_1703"/>
    <property type="match status" value="1"/>
</dbReference>
<dbReference type="Gene3D" id="3.40.47.10">
    <property type="match status" value="1"/>
</dbReference>
<dbReference type="HAMAP" id="MF_01409">
    <property type="entry name" value="HMG_CoA_synth_arch"/>
    <property type="match status" value="1"/>
</dbReference>
<dbReference type="InterPro" id="IPR013747">
    <property type="entry name" value="ACP_syn_III_C"/>
</dbReference>
<dbReference type="InterPro" id="IPR004656">
    <property type="entry name" value="HMG_CoA_Synthase"/>
</dbReference>
<dbReference type="InterPro" id="IPR016039">
    <property type="entry name" value="Thiolase-like"/>
</dbReference>
<dbReference type="InterPro" id="IPR020616">
    <property type="entry name" value="Thiolase_N"/>
</dbReference>
<dbReference type="NCBIfam" id="TIGR00748">
    <property type="entry name" value="HMG_CoA_syn_Arc"/>
    <property type="match status" value="1"/>
</dbReference>
<dbReference type="NCBIfam" id="NF003274">
    <property type="entry name" value="PRK04262.1"/>
    <property type="match status" value="1"/>
</dbReference>
<dbReference type="PANTHER" id="PTHR43323">
    <property type="entry name" value="3-HYDROXY-3-METHYLGLUTARYL COENZYME A SYNTHASE"/>
    <property type="match status" value="1"/>
</dbReference>
<dbReference type="PANTHER" id="PTHR43323:SF2">
    <property type="entry name" value="HYDROXYMETHYLGLUTARYL-COA SYNTHASE"/>
    <property type="match status" value="1"/>
</dbReference>
<dbReference type="Pfam" id="PF08541">
    <property type="entry name" value="ACP_syn_III_C"/>
    <property type="match status" value="1"/>
</dbReference>
<dbReference type="Pfam" id="PF00108">
    <property type="entry name" value="Thiolase_N"/>
    <property type="match status" value="1"/>
</dbReference>
<dbReference type="SUPFAM" id="SSF53901">
    <property type="entry name" value="Thiolase-like"/>
    <property type="match status" value="2"/>
</dbReference>
<comment type="function">
    <text evidence="1">Catalyzes the condensation of acetyl-CoA with acetoacetyl-CoA to form 3-hydroxy-3-methylglutaryl-CoA (HMG-CoA). Functions in the mevalonate (MVA) pathway leading to isopentenyl diphosphate (IPP), a key precursor for the biosynthesis of isoprenoid compounds that are building blocks of archaeal membrane lipids.</text>
</comment>
<comment type="catalytic activity">
    <reaction evidence="1">
        <text>acetoacetyl-CoA + acetyl-CoA + H2O = (3S)-3-hydroxy-3-methylglutaryl-CoA + CoA + H(+)</text>
        <dbReference type="Rhea" id="RHEA:10188"/>
        <dbReference type="ChEBI" id="CHEBI:15377"/>
        <dbReference type="ChEBI" id="CHEBI:15378"/>
        <dbReference type="ChEBI" id="CHEBI:43074"/>
        <dbReference type="ChEBI" id="CHEBI:57286"/>
        <dbReference type="ChEBI" id="CHEBI:57287"/>
        <dbReference type="ChEBI" id="CHEBI:57288"/>
        <dbReference type="EC" id="2.3.3.10"/>
    </reaction>
    <physiologicalReaction direction="left-to-right" evidence="1">
        <dbReference type="Rhea" id="RHEA:10189"/>
    </physiologicalReaction>
</comment>
<comment type="pathway">
    <text evidence="1">Metabolic intermediate biosynthesis; (R)-mevalonate biosynthesis; (R)-mevalonate from acetyl-CoA: step 2/3.</text>
</comment>
<comment type="subunit">
    <text evidence="1">Interacts with acetoacetyl-CoA thiolase that catalyzes the precedent step in the pathway and with a DUF35 protein. The acetoacetyl-CoA thiolase/HMG-CoA synthase complex channels the intermediate via a fused CoA-binding site, which allows for efficient coupling of the endergonic thiolase reaction with the exergonic HMGCS reaction.</text>
</comment>
<comment type="similarity">
    <text evidence="1">Belongs to the thiolase-like superfamily. Archaeal HMG-CoA synthase family.</text>
</comment>
<gene>
    <name type="ordered locus">Tneu_1356</name>
</gene>
<accession>B1Y953</accession>
<feature type="chain" id="PRO_1000145510" description="Hydroxymethylglutaryl-CoA synthase">
    <location>
        <begin position="1"/>
        <end position="351"/>
    </location>
</feature>
<feature type="active site" description="Proton donor/acceptor" evidence="1">
    <location>
        <position position="82"/>
    </location>
</feature>
<feature type="active site" description="Acyl-thioester intermediate" evidence="1">
    <location>
        <position position="114"/>
    </location>
</feature>
<feature type="active site" description="Proton donor/acceptor" evidence="1">
    <location>
        <position position="236"/>
    </location>
</feature>
<feature type="binding site" evidence="1">
    <location>
        <position position="30"/>
    </location>
    <ligand>
        <name>(3S)-3-hydroxy-3-methylglutaryl-CoA</name>
        <dbReference type="ChEBI" id="CHEBI:43074"/>
    </ligand>
</feature>
<feature type="binding site" evidence="1">
    <location>
        <position position="114"/>
    </location>
    <ligand>
        <name>(3S)-3-hydroxy-3-methylglutaryl-CoA</name>
        <dbReference type="ChEBI" id="CHEBI:43074"/>
    </ligand>
</feature>
<feature type="binding site" evidence="1">
    <location>
        <position position="155"/>
    </location>
    <ligand>
        <name>(3S)-3-hydroxy-3-methylglutaryl-CoA</name>
        <dbReference type="ChEBI" id="CHEBI:43074"/>
    </ligand>
</feature>
<feature type="binding site" evidence="1">
    <location>
        <position position="203"/>
    </location>
    <ligand>
        <name>(3S)-3-hydroxy-3-methylglutaryl-CoA</name>
        <dbReference type="ChEBI" id="CHEBI:43074"/>
    </ligand>
</feature>
<feature type="binding site" evidence="1">
    <location>
        <position position="236"/>
    </location>
    <ligand>
        <name>(3S)-3-hydroxy-3-methylglutaryl-CoA</name>
        <dbReference type="ChEBI" id="CHEBI:43074"/>
    </ligand>
</feature>
<feature type="binding site" evidence="1">
    <location>
        <position position="241"/>
    </location>
    <ligand>
        <name>CoA</name>
        <dbReference type="ChEBI" id="CHEBI:57287"/>
        <note>ligand shared with acetoacetyl-CoA thiolase</note>
    </ligand>
</feature>
<feature type="binding site" evidence="1">
    <location>
        <position position="245"/>
    </location>
    <ligand>
        <name>(3S)-3-hydroxy-3-methylglutaryl-CoA</name>
        <dbReference type="ChEBI" id="CHEBI:43074"/>
    </ligand>
</feature>
<feature type="binding site" evidence="1">
    <location>
        <position position="268"/>
    </location>
    <ligand>
        <name>(3S)-3-hydroxy-3-methylglutaryl-CoA</name>
        <dbReference type="ChEBI" id="CHEBI:43074"/>
    </ligand>
</feature>
<feature type="binding site" evidence="1">
    <location>
        <position position="298"/>
    </location>
    <ligand>
        <name>(3S)-3-hydroxy-3-methylglutaryl-CoA</name>
        <dbReference type="ChEBI" id="CHEBI:43074"/>
    </ligand>
</feature>
<name>HMGCS_PYRNV</name>
<protein>
    <recommendedName>
        <fullName evidence="1">Hydroxymethylglutaryl-CoA synthase</fullName>
        <shortName evidence="1">HMG-CoA synthase</shortName>
        <shortName evidence="1">HMGCS</shortName>
        <ecNumber evidence="1">2.3.3.10</ecNumber>
    </recommendedName>
</protein>
<sequence length="351" mass="38077">MGRVGVVSWGAYIPKYRIRTEEVARIWGDDPLRIVDLYLVDEKSVEGIDEDAVTIAVEAARRALRRATLDPRRIGAVYVGTESKPYAVKPISSILIDALGLSNNVFAVDMEFACKAGSEGLMAAVGLVESGKVEYGMTVGADTSQGEPGEHLEYSASSGGVALVVGREGVAAELEAAYAYASDTPDFWRREGSPYPMHGEGFTGEPAYFRHVINAARGLMAAYGYKPSDFAYAVFHQPNGRFPVRAASTLNIPMEKVKPGIVVTHIGNTYNASALMGFAKVLDQAKPGDKILVVTFGSGAGSNAYVFSATDLIKERQNAAVPTVEAMLRDKIYVDYAQYLKMRKMIKLFEY</sequence>
<proteinExistence type="inferred from homology"/>
<keyword id="KW-0012">Acyltransferase</keyword>
<keyword id="KW-0414">Isoprene biosynthesis</keyword>
<keyword id="KW-0808">Transferase</keyword>
<reference key="1">
    <citation type="submission" date="2008-03" db="EMBL/GenBank/DDBJ databases">
        <title>Complete sequence of Thermoproteus neutrophilus V24Sta.</title>
        <authorList>
            <consortium name="US DOE Joint Genome Institute"/>
            <person name="Copeland A."/>
            <person name="Lucas S."/>
            <person name="Lapidus A."/>
            <person name="Glavina del Rio T."/>
            <person name="Dalin E."/>
            <person name="Tice H."/>
            <person name="Bruce D."/>
            <person name="Goodwin L."/>
            <person name="Pitluck S."/>
            <person name="Sims D."/>
            <person name="Brettin T."/>
            <person name="Detter J.C."/>
            <person name="Han C."/>
            <person name="Kuske C.R."/>
            <person name="Schmutz J."/>
            <person name="Larimer F."/>
            <person name="Land M."/>
            <person name="Hauser L."/>
            <person name="Kyrpides N."/>
            <person name="Mikhailova N."/>
            <person name="Biddle J.F."/>
            <person name="Zhang Z."/>
            <person name="Fitz-Gibbon S.T."/>
            <person name="Lowe T.M."/>
            <person name="Saltikov C."/>
            <person name="House C.H."/>
            <person name="Richardson P."/>
        </authorList>
    </citation>
    <scope>NUCLEOTIDE SEQUENCE [LARGE SCALE GENOMIC DNA]</scope>
    <source>
        <strain>DSM 2338 / JCM 9278 / NBRC 100436 / V24Sta</strain>
    </source>
</reference>
<organism>
    <name type="scientific">Pyrobaculum neutrophilum (strain DSM 2338 / JCM 9278 / NBRC 100436 / V24Sta)</name>
    <name type="common">Thermoproteus neutrophilus</name>
    <dbReference type="NCBI Taxonomy" id="444157"/>
    <lineage>
        <taxon>Archaea</taxon>
        <taxon>Thermoproteota</taxon>
        <taxon>Thermoprotei</taxon>
        <taxon>Thermoproteales</taxon>
        <taxon>Thermoproteaceae</taxon>
        <taxon>Pyrobaculum</taxon>
    </lineage>
</organism>